<keyword id="KW-0010">Activator</keyword>
<keyword id="KW-0238">DNA-binding</keyword>
<keyword id="KW-0678">Repressor</keyword>
<keyword id="KW-0804">Transcription</keyword>
<keyword id="KW-0805">Transcription regulation</keyword>
<organism>
    <name type="scientific">Yersinia enterocolitica serotype O:8 / biotype 1B (strain NCTC 13174 / 8081)</name>
    <dbReference type="NCBI Taxonomy" id="393305"/>
    <lineage>
        <taxon>Bacteria</taxon>
        <taxon>Pseudomonadati</taxon>
        <taxon>Pseudomonadota</taxon>
        <taxon>Gammaproteobacteria</taxon>
        <taxon>Enterobacterales</taxon>
        <taxon>Yersiniaceae</taxon>
        <taxon>Yersinia</taxon>
    </lineage>
</organism>
<gene>
    <name evidence="1" type="primary">slyA</name>
    <name type="ordered locus">YE2144</name>
</gene>
<comment type="function">
    <text evidence="1">Transcription regulator that can specifically activate or repress expression of target genes.</text>
</comment>
<comment type="subunit">
    <text evidence="1">Homodimer.</text>
</comment>
<comment type="similarity">
    <text evidence="1">Belongs to the SlyA family.</text>
</comment>
<reference key="1">
    <citation type="journal article" date="2006" name="PLoS Genet.">
        <title>The complete genome sequence and comparative genome analysis of the high pathogenicity Yersinia enterocolitica strain 8081.</title>
        <authorList>
            <person name="Thomson N.R."/>
            <person name="Howard S."/>
            <person name="Wren B.W."/>
            <person name="Holden M.T.G."/>
            <person name="Crossman L."/>
            <person name="Challis G.L."/>
            <person name="Churcher C."/>
            <person name="Mungall K."/>
            <person name="Brooks K."/>
            <person name="Chillingworth T."/>
            <person name="Feltwell T."/>
            <person name="Abdellah Z."/>
            <person name="Hauser H."/>
            <person name="Jagels K."/>
            <person name="Maddison M."/>
            <person name="Moule S."/>
            <person name="Sanders M."/>
            <person name="Whitehead S."/>
            <person name="Quail M.A."/>
            <person name="Dougan G."/>
            <person name="Parkhill J."/>
            <person name="Prentice M.B."/>
        </authorList>
    </citation>
    <scope>NUCLEOTIDE SEQUENCE [LARGE SCALE GENOMIC DNA]</scope>
    <source>
        <strain>NCTC 13174 / 8081</strain>
    </source>
</reference>
<evidence type="ECO:0000255" key="1">
    <source>
        <dbReference type="HAMAP-Rule" id="MF_01819"/>
    </source>
</evidence>
<name>SLYA_YERE8</name>
<dbReference type="EMBL" id="AM286415">
    <property type="protein sequence ID" value="CAL12214.1"/>
    <property type="molecule type" value="Genomic_DNA"/>
</dbReference>
<dbReference type="RefSeq" id="YP_001006384.1">
    <property type="nucleotide sequence ID" value="NC_008800.1"/>
</dbReference>
<dbReference type="SMR" id="A1JNY1"/>
<dbReference type="KEGG" id="yen:YE2144"/>
<dbReference type="PATRIC" id="fig|393305.7.peg.2308"/>
<dbReference type="eggNOG" id="COG1846">
    <property type="taxonomic scope" value="Bacteria"/>
</dbReference>
<dbReference type="HOGENOM" id="CLU_083287_18_2_6"/>
<dbReference type="OrthoDB" id="5296557at2"/>
<dbReference type="Proteomes" id="UP000000642">
    <property type="component" value="Chromosome"/>
</dbReference>
<dbReference type="GO" id="GO:0003677">
    <property type="term" value="F:DNA binding"/>
    <property type="evidence" value="ECO:0007669"/>
    <property type="project" value="UniProtKB-UniRule"/>
</dbReference>
<dbReference type="GO" id="GO:0003700">
    <property type="term" value="F:DNA-binding transcription factor activity"/>
    <property type="evidence" value="ECO:0007669"/>
    <property type="project" value="UniProtKB-UniRule"/>
</dbReference>
<dbReference type="GO" id="GO:0006950">
    <property type="term" value="P:response to stress"/>
    <property type="evidence" value="ECO:0007669"/>
    <property type="project" value="TreeGrafter"/>
</dbReference>
<dbReference type="FunFam" id="1.10.10.10:FF:000261">
    <property type="entry name" value="Transcriptional regulator SlyA"/>
    <property type="match status" value="1"/>
</dbReference>
<dbReference type="Gene3D" id="1.10.10.10">
    <property type="entry name" value="Winged helix-like DNA-binding domain superfamily/Winged helix DNA-binding domain"/>
    <property type="match status" value="1"/>
</dbReference>
<dbReference type="HAMAP" id="MF_01819">
    <property type="entry name" value="HTH_type_SlyA"/>
    <property type="match status" value="1"/>
</dbReference>
<dbReference type="InterPro" id="IPR000835">
    <property type="entry name" value="HTH_MarR-typ"/>
</dbReference>
<dbReference type="InterPro" id="IPR039422">
    <property type="entry name" value="MarR/SlyA-like"/>
</dbReference>
<dbReference type="InterPro" id="IPR023187">
    <property type="entry name" value="Tscrpt_reg_MarR-type_CS"/>
</dbReference>
<dbReference type="InterPro" id="IPR023071">
    <property type="entry name" value="Tscrpt_reg_SlyA"/>
</dbReference>
<dbReference type="InterPro" id="IPR036388">
    <property type="entry name" value="WH-like_DNA-bd_sf"/>
</dbReference>
<dbReference type="InterPro" id="IPR036390">
    <property type="entry name" value="WH_DNA-bd_sf"/>
</dbReference>
<dbReference type="NCBIfam" id="NF002926">
    <property type="entry name" value="PRK03573.1"/>
    <property type="match status" value="1"/>
</dbReference>
<dbReference type="PANTHER" id="PTHR33164:SF64">
    <property type="entry name" value="TRANSCRIPTIONAL REGULATOR SLYA"/>
    <property type="match status" value="1"/>
</dbReference>
<dbReference type="PANTHER" id="PTHR33164">
    <property type="entry name" value="TRANSCRIPTIONAL REGULATOR, MARR FAMILY"/>
    <property type="match status" value="1"/>
</dbReference>
<dbReference type="Pfam" id="PF01047">
    <property type="entry name" value="MarR"/>
    <property type="match status" value="1"/>
</dbReference>
<dbReference type="PRINTS" id="PR00598">
    <property type="entry name" value="HTHMARR"/>
</dbReference>
<dbReference type="SMART" id="SM00347">
    <property type="entry name" value="HTH_MARR"/>
    <property type="match status" value="1"/>
</dbReference>
<dbReference type="SUPFAM" id="SSF46785">
    <property type="entry name" value="Winged helix' DNA-binding domain"/>
    <property type="match status" value="1"/>
</dbReference>
<dbReference type="PROSITE" id="PS01117">
    <property type="entry name" value="HTH_MARR_1"/>
    <property type="match status" value="1"/>
</dbReference>
<dbReference type="PROSITE" id="PS50995">
    <property type="entry name" value="HTH_MARR_2"/>
    <property type="match status" value="1"/>
</dbReference>
<accession>A1JNY1</accession>
<protein>
    <recommendedName>
        <fullName evidence="1">Transcriptional regulator SlyA</fullName>
    </recommendedName>
</protein>
<feature type="chain" id="PRO_1000070357" description="Transcriptional regulator SlyA">
    <location>
        <begin position="1"/>
        <end position="143"/>
    </location>
</feature>
<feature type="domain" description="HTH marR-type" evidence="1">
    <location>
        <begin position="2"/>
        <end position="135"/>
    </location>
</feature>
<feature type="DNA-binding region" description="H-T-H motif" evidence="1">
    <location>
        <begin position="49"/>
        <end position="72"/>
    </location>
</feature>
<proteinExistence type="inferred from homology"/>
<sequence length="143" mass="16240">MESTLGSDLARLVRVWRALIDHRLKPLELTQTHWVTLHNINRLPPEQSQIQLAKAIGIEQPSLVRTLDQLEEKGLITRHTCANDRRAKRIKLTEQSSPIIEQVDGVICSTRKEILGGISPDEIELLSGLIDKLERNIIQLQSK</sequence>